<evidence type="ECO:0000255" key="1">
    <source>
        <dbReference type="HAMAP-Rule" id="MF_00268"/>
    </source>
</evidence>
<name>RECA_NEIGO</name>
<protein>
    <recommendedName>
        <fullName evidence="1">Protein RecA</fullName>
    </recommendedName>
    <alternativeName>
        <fullName evidence="1">Recombinase A</fullName>
    </alternativeName>
</protein>
<reference key="1">
    <citation type="journal article" date="1990" name="Gene">
        <title>Nucleotide sequence and expression in Escherichia coli of the recA gene of Neisseria gonorrhoeae.</title>
        <authorList>
            <person name="Fyfe J.A.M."/>
            <person name="Davies J.K."/>
        </authorList>
    </citation>
    <scope>NUCLEOTIDE SEQUENCE [GENOMIC DNA]</scope>
    <source>
        <strain>MS11</strain>
    </source>
</reference>
<reference key="2">
    <citation type="journal article" date="1992" name="Mol. Microbiol.">
        <title>Sequence diversity within the argF, fbp and recA genes of natural isolates of Neisseria meningitidis: interspecies recombination within the argF gene.</title>
        <authorList>
            <person name="Zhou J."/>
            <person name="Spratt B.G."/>
        </authorList>
    </citation>
    <scope>NUCLEOTIDE SEQUENCE [GENOMIC DNA] OF 24-297</scope>
    <source>
        <strain>FA19</strain>
    </source>
</reference>
<reference key="3">
    <citation type="journal article" date="1996" name="J. Mol. Evol.">
        <title>A comparison of the nucleotide sequences of the adk and recA genes of pathogenic and commensal Neisseria species: evidence for extensive interspecies recombination within adk.</title>
        <authorList>
            <person name="Feil E."/>
            <person name="Zhou J."/>
            <person name="Maynard Smith J."/>
            <person name="Spratt B.G."/>
        </authorList>
    </citation>
    <scope>NUCLEOTIDE SEQUENCE [GENOMIC DNA] OF 24-297</scope>
    <source>
        <strain>CH95</strain>
    </source>
</reference>
<organism>
    <name type="scientific">Neisseria gonorrhoeae</name>
    <dbReference type="NCBI Taxonomy" id="485"/>
    <lineage>
        <taxon>Bacteria</taxon>
        <taxon>Pseudomonadati</taxon>
        <taxon>Pseudomonadota</taxon>
        <taxon>Betaproteobacteria</taxon>
        <taxon>Neisseriales</taxon>
        <taxon>Neisseriaceae</taxon>
        <taxon>Neisseria</taxon>
    </lineage>
</organism>
<accession>P21152</accession>
<feature type="chain" id="PRO_0000122774" description="Protein RecA">
    <location>
        <begin position="1"/>
        <end position="348"/>
    </location>
</feature>
<feature type="binding site" evidence="1">
    <location>
        <begin position="66"/>
        <end position="73"/>
    </location>
    <ligand>
        <name>ATP</name>
        <dbReference type="ChEBI" id="CHEBI:30616"/>
    </ligand>
</feature>
<feature type="sequence variant" description="In strain: MS11.">
    <original>P</original>
    <variation>R</variation>
    <location>
        <position position="57"/>
    </location>
</feature>
<sequence>MSDDKSKALAAALAQIEKSFGKGAIMKMDGSQQEENLEVISTGSLGLDLALGVGGLPRGRIVEIFGPESSGKTTLCLEAVAQCQKNGGVCAFVDAEHAFDPVYARKLGVKVEELYLSQPDTGEQALEICDTLVRSGGIDMVVVDSVAALVPKAEIEGDMGDSHVGLQARLMSQALRKLTGHIKKTNTLVVFINQIRMKIGVMFGSPETTTGGNALKFYSSVRLDIRRTGSIKKGEEVLGNETRVKVIKNKVAPPFRQAEFDILYGEGISWEGELIDIGVKNDIINKSGAWYSYNGAKIGQGKDNVRVWLKENPEISDEIDAKIRALNGVEMHITEGTQDETDGERPEE</sequence>
<proteinExistence type="inferred from homology"/>
<dbReference type="EMBL" id="X64850">
    <property type="protein sequence ID" value="CAA46062.1"/>
    <property type="molecule type" value="Genomic_DNA"/>
</dbReference>
<dbReference type="EMBL" id="X17374">
    <property type="protein sequence ID" value="CAA35247.1"/>
    <property type="molecule type" value="Genomic_DNA"/>
</dbReference>
<dbReference type="EMBL" id="X64842">
    <property type="protein sequence ID" value="CAA46054.1"/>
    <property type="molecule type" value="Genomic_DNA"/>
</dbReference>
<dbReference type="EMBL" id="U57902">
    <property type="protein sequence ID" value="AAB49193.1"/>
    <property type="molecule type" value="Genomic_DNA"/>
</dbReference>
<dbReference type="PIR" id="JQ0745">
    <property type="entry name" value="JQ0745"/>
</dbReference>
<dbReference type="RefSeq" id="WP_003688695.1">
    <property type="nucleotide sequence ID" value="NZ_WHPL01000002.1"/>
</dbReference>
<dbReference type="SMR" id="P21152"/>
<dbReference type="GeneID" id="66753085"/>
<dbReference type="OMA" id="DSKMGLH"/>
<dbReference type="GO" id="GO:0005829">
    <property type="term" value="C:cytosol"/>
    <property type="evidence" value="ECO:0007669"/>
    <property type="project" value="TreeGrafter"/>
</dbReference>
<dbReference type="GO" id="GO:0005524">
    <property type="term" value="F:ATP binding"/>
    <property type="evidence" value="ECO:0007669"/>
    <property type="project" value="UniProtKB-UniRule"/>
</dbReference>
<dbReference type="GO" id="GO:0016887">
    <property type="term" value="F:ATP hydrolysis activity"/>
    <property type="evidence" value="ECO:0000314"/>
    <property type="project" value="CACAO"/>
</dbReference>
<dbReference type="GO" id="GO:0140664">
    <property type="term" value="F:ATP-dependent DNA damage sensor activity"/>
    <property type="evidence" value="ECO:0007669"/>
    <property type="project" value="InterPro"/>
</dbReference>
<dbReference type="GO" id="GO:0003684">
    <property type="term" value="F:damaged DNA binding"/>
    <property type="evidence" value="ECO:0007669"/>
    <property type="project" value="UniProtKB-UniRule"/>
</dbReference>
<dbReference type="GO" id="GO:0003697">
    <property type="term" value="F:single-stranded DNA binding"/>
    <property type="evidence" value="ECO:0007669"/>
    <property type="project" value="UniProtKB-UniRule"/>
</dbReference>
<dbReference type="GO" id="GO:0006310">
    <property type="term" value="P:DNA recombination"/>
    <property type="evidence" value="ECO:0007669"/>
    <property type="project" value="UniProtKB-UniRule"/>
</dbReference>
<dbReference type="GO" id="GO:0006281">
    <property type="term" value="P:DNA repair"/>
    <property type="evidence" value="ECO:0007669"/>
    <property type="project" value="UniProtKB-UniRule"/>
</dbReference>
<dbReference type="GO" id="GO:0009432">
    <property type="term" value="P:SOS response"/>
    <property type="evidence" value="ECO:0007669"/>
    <property type="project" value="UniProtKB-UniRule"/>
</dbReference>
<dbReference type="CDD" id="cd00983">
    <property type="entry name" value="RecA"/>
    <property type="match status" value="1"/>
</dbReference>
<dbReference type="FunFam" id="3.40.50.300:FF:000087">
    <property type="entry name" value="Recombinase RecA"/>
    <property type="match status" value="1"/>
</dbReference>
<dbReference type="Gene3D" id="3.40.50.300">
    <property type="entry name" value="P-loop containing nucleotide triphosphate hydrolases"/>
    <property type="match status" value="1"/>
</dbReference>
<dbReference type="HAMAP" id="MF_00268">
    <property type="entry name" value="RecA"/>
    <property type="match status" value="1"/>
</dbReference>
<dbReference type="InterPro" id="IPR003593">
    <property type="entry name" value="AAA+_ATPase"/>
</dbReference>
<dbReference type="InterPro" id="IPR013765">
    <property type="entry name" value="DNA_recomb/repair_RecA"/>
</dbReference>
<dbReference type="InterPro" id="IPR020584">
    <property type="entry name" value="DNA_recomb/repair_RecA_CS"/>
</dbReference>
<dbReference type="InterPro" id="IPR027417">
    <property type="entry name" value="P-loop_NTPase"/>
</dbReference>
<dbReference type="InterPro" id="IPR049261">
    <property type="entry name" value="RecA-like_C"/>
</dbReference>
<dbReference type="InterPro" id="IPR049428">
    <property type="entry name" value="RecA-like_N"/>
</dbReference>
<dbReference type="InterPro" id="IPR020588">
    <property type="entry name" value="RecA_ATP-bd"/>
</dbReference>
<dbReference type="InterPro" id="IPR023400">
    <property type="entry name" value="RecA_C_sf"/>
</dbReference>
<dbReference type="InterPro" id="IPR020587">
    <property type="entry name" value="RecA_monomer-monomer_interface"/>
</dbReference>
<dbReference type="NCBIfam" id="TIGR02012">
    <property type="entry name" value="tigrfam_recA"/>
    <property type="match status" value="1"/>
</dbReference>
<dbReference type="PANTHER" id="PTHR45900:SF1">
    <property type="entry name" value="MITOCHONDRIAL DNA REPAIR PROTEIN RECA HOMOLOG-RELATED"/>
    <property type="match status" value="1"/>
</dbReference>
<dbReference type="PANTHER" id="PTHR45900">
    <property type="entry name" value="RECA"/>
    <property type="match status" value="1"/>
</dbReference>
<dbReference type="Pfam" id="PF00154">
    <property type="entry name" value="RecA"/>
    <property type="match status" value="1"/>
</dbReference>
<dbReference type="Pfam" id="PF21096">
    <property type="entry name" value="RecA_C"/>
    <property type="match status" value="1"/>
</dbReference>
<dbReference type="PRINTS" id="PR00142">
    <property type="entry name" value="RECA"/>
</dbReference>
<dbReference type="SMART" id="SM00382">
    <property type="entry name" value="AAA"/>
    <property type="match status" value="1"/>
</dbReference>
<dbReference type="SUPFAM" id="SSF52540">
    <property type="entry name" value="P-loop containing nucleoside triphosphate hydrolases"/>
    <property type="match status" value="1"/>
</dbReference>
<dbReference type="SUPFAM" id="SSF54752">
    <property type="entry name" value="RecA protein, C-terminal domain"/>
    <property type="match status" value="1"/>
</dbReference>
<dbReference type="PROSITE" id="PS00321">
    <property type="entry name" value="RECA_1"/>
    <property type="match status" value="1"/>
</dbReference>
<dbReference type="PROSITE" id="PS50162">
    <property type="entry name" value="RECA_2"/>
    <property type="match status" value="1"/>
</dbReference>
<dbReference type="PROSITE" id="PS50163">
    <property type="entry name" value="RECA_3"/>
    <property type="match status" value="1"/>
</dbReference>
<gene>
    <name evidence="1" type="primary">recA</name>
</gene>
<comment type="function">
    <text evidence="1">Can catalyze the hydrolysis of ATP in the presence of single-stranded DNA, the ATP-dependent uptake of single-stranded DNA by duplex DNA, and the ATP-dependent hybridization of homologous single-stranded DNAs. It interacts with LexA causing its activation and leading to its autocatalytic cleavage.</text>
</comment>
<comment type="subcellular location">
    <subcellularLocation>
        <location evidence="1">Cytoplasm</location>
    </subcellularLocation>
</comment>
<comment type="similarity">
    <text evidence="1">Belongs to the RecA family.</text>
</comment>
<keyword id="KW-0067">ATP-binding</keyword>
<keyword id="KW-0963">Cytoplasm</keyword>
<keyword id="KW-0227">DNA damage</keyword>
<keyword id="KW-0233">DNA recombination</keyword>
<keyword id="KW-0234">DNA repair</keyword>
<keyword id="KW-0238">DNA-binding</keyword>
<keyword id="KW-0547">Nucleotide-binding</keyword>
<keyword id="KW-0742">SOS response</keyword>